<dbReference type="EC" id="2.1.2.11" evidence="1"/>
<dbReference type="EMBL" id="CP000728">
    <property type="protein sequence ID" value="ABS40800.1"/>
    <property type="molecule type" value="Genomic_DNA"/>
</dbReference>
<dbReference type="RefSeq" id="WP_003356105.1">
    <property type="nucleotide sequence ID" value="NC_009699.1"/>
</dbReference>
<dbReference type="SMR" id="A7GAI6"/>
<dbReference type="GeneID" id="5184680"/>
<dbReference type="KEGG" id="cbf:CLI_0510"/>
<dbReference type="HOGENOM" id="CLU_036645_1_0_9"/>
<dbReference type="UniPathway" id="UPA00028">
    <property type="reaction ID" value="UER00003"/>
</dbReference>
<dbReference type="Proteomes" id="UP000002410">
    <property type="component" value="Chromosome"/>
</dbReference>
<dbReference type="GO" id="GO:0005737">
    <property type="term" value="C:cytoplasm"/>
    <property type="evidence" value="ECO:0007669"/>
    <property type="project" value="UniProtKB-SubCell"/>
</dbReference>
<dbReference type="GO" id="GO:0003864">
    <property type="term" value="F:3-methyl-2-oxobutanoate hydroxymethyltransferase activity"/>
    <property type="evidence" value="ECO:0007669"/>
    <property type="project" value="UniProtKB-UniRule"/>
</dbReference>
<dbReference type="GO" id="GO:0000287">
    <property type="term" value="F:magnesium ion binding"/>
    <property type="evidence" value="ECO:0007669"/>
    <property type="project" value="TreeGrafter"/>
</dbReference>
<dbReference type="GO" id="GO:0015940">
    <property type="term" value="P:pantothenate biosynthetic process"/>
    <property type="evidence" value="ECO:0007669"/>
    <property type="project" value="UniProtKB-UniRule"/>
</dbReference>
<dbReference type="CDD" id="cd06557">
    <property type="entry name" value="KPHMT-like"/>
    <property type="match status" value="1"/>
</dbReference>
<dbReference type="FunFam" id="3.20.20.60:FF:000003">
    <property type="entry name" value="3-methyl-2-oxobutanoate hydroxymethyltransferase"/>
    <property type="match status" value="1"/>
</dbReference>
<dbReference type="Gene3D" id="3.20.20.60">
    <property type="entry name" value="Phosphoenolpyruvate-binding domains"/>
    <property type="match status" value="1"/>
</dbReference>
<dbReference type="HAMAP" id="MF_00156">
    <property type="entry name" value="PanB"/>
    <property type="match status" value="1"/>
</dbReference>
<dbReference type="InterPro" id="IPR003700">
    <property type="entry name" value="Pantoate_hydroxy_MeTrfase"/>
</dbReference>
<dbReference type="InterPro" id="IPR015813">
    <property type="entry name" value="Pyrv/PenolPyrv_kinase-like_dom"/>
</dbReference>
<dbReference type="InterPro" id="IPR040442">
    <property type="entry name" value="Pyrv_kinase-like_dom_sf"/>
</dbReference>
<dbReference type="NCBIfam" id="TIGR00222">
    <property type="entry name" value="panB"/>
    <property type="match status" value="1"/>
</dbReference>
<dbReference type="NCBIfam" id="NF001452">
    <property type="entry name" value="PRK00311.1"/>
    <property type="match status" value="1"/>
</dbReference>
<dbReference type="PANTHER" id="PTHR20881">
    <property type="entry name" value="3-METHYL-2-OXOBUTANOATE HYDROXYMETHYLTRANSFERASE"/>
    <property type="match status" value="1"/>
</dbReference>
<dbReference type="PANTHER" id="PTHR20881:SF0">
    <property type="entry name" value="3-METHYL-2-OXOBUTANOATE HYDROXYMETHYLTRANSFERASE"/>
    <property type="match status" value="1"/>
</dbReference>
<dbReference type="Pfam" id="PF02548">
    <property type="entry name" value="Pantoate_transf"/>
    <property type="match status" value="1"/>
</dbReference>
<dbReference type="PIRSF" id="PIRSF000388">
    <property type="entry name" value="Pantoate_hydroxy_MeTrfase"/>
    <property type="match status" value="1"/>
</dbReference>
<dbReference type="SUPFAM" id="SSF51621">
    <property type="entry name" value="Phosphoenolpyruvate/pyruvate domain"/>
    <property type="match status" value="1"/>
</dbReference>
<protein>
    <recommendedName>
        <fullName evidence="1">3-methyl-2-oxobutanoate hydroxymethyltransferase</fullName>
        <ecNumber evidence="1">2.1.2.11</ecNumber>
    </recommendedName>
    <alternativeName>
        <fullName evidence="1">Ketopantoate hydroxymethyltransferase</fullName>
        <shortName evidence="1">KPHMT</shortName>
    </alternativeName>
</protein>
<proteinExistence type="inferred from homology"/>
<comment type="function">
    <text evidence="1">Catalyzes the reversible reaction in which hydroxymethyl group from 5,10-methylenetetrahydrofolate is transferred onto alpha-ketoisovalerate to form ketopantoate.</text>
</comment>
<comment type="catalytic activity">
    <reaction evidence="1">
        <text>3-methyl-2-oxobutanoate + (6R)-5,10-methylene-5,6,7,8-tetrahydrofolate + H2O = 2-dehydropantoate + (6S)-5,6,7,8-tetrahydrofolate</text>
        <dbReference type="Rhea" id="RHEA:11824"/>
        <dbReference type="ChEBI" id="CHEBI:11561"/>
        <dbReference type="ChEBI" id="CHEBI:11851"/>
        <dbReference type="ChEBI" id="CHEBI:15377"/>
        <dbReference type="ChEBI" id="CHEBI:15636"/>
        <dbReference type="ChEBI" id="CHEBI:57453"/>
        <dbReference type="EC" id="2.1.2.11"/>
    </reaction>
</comment>
<comment type="cofactor">
    <cofactor evidence="1">
        <name>Mg(2+)</name>
        <dbReference type="ChEBI" id="CHEBI:18420"/>
    </cofactor>
    <text evidence="1">Binds 1 Mg(2+) ion per subunit.</text>
</comment>
<comment type="pathway">
    <text evidence="1">Cofactor biosynthesis; (R)-pantothenate biosynthesis; (R)-pantoate from 3-methyl-2-oxobutanoate: step 1/2.</text>
</comment>
<comment type="subunit">
    <text evidence="1">Homodecamer; pentamer of dimers.</text>
</comment>
<comment type="subcellular location">
    <subcellularLocation>
        <location evidence="1">Cytoplasm</location>
    </subcellularLocation>
</comment>
<comment type="similarity">
    <text evidence="1">Belongs to the PanB family.</text>
</comment>
<accession>A7GAI6</accession>
<keyword id="KW-0963">Cytoplasm</keyword>
<keyword id="KW-0460">Magnesium</keyword>
<keyword id="KW-0479">Metal-binding</keyword>
<keyword id="KW-0566">Pantothenate biosynthesis</keyword>
<keyword id="KW-0808">Transferase</keyword>
<organism>
    <name type="scientific">Clostridium botulinum (strain Langeland / NCTC 10281 / Type F)</name>
    <dbReference type="NCBI Taxonomy" id="441772"/>
    <lineage>
        <taxon>Bacteria</taxon>
        <taxon>Bacillati</taxon>
        <taxon>Bacillota</taxon>
        <taxon>Clostridia</taxon>
        <taxon>Eubacteriales</taxon>
        <taxon>Clostridiaceae</taxon>
        <taxon>Clostridium</taxon>
    </lineage>
</organism>
<name>PANB_CLOBL</name>
<evidence type="ECO:0000255" key="1">
    <source>
        <dbReference type="HAMAP-Rule" id="MF_00156"/>
    </source>
</evidence>
<reference key="1">
    <citation type="submission" date="2007-06" db="EMBL/GenBank/DDBJ databases">
        <authorList>
            <person name="Brinkac L.M."/>
            <person name="Daugherty S."/>
            <person name="Dodson R.J."/>
            <person name="Madupu R."/>
            <person name="Brown J.L."/>
            <person name="Bruce D."/>
            <person name="Detter C."/>
            <person name="Munk C."/>
            <person name="Smith L.A."/>
            <person name="Smith T.J."/>
            <person name="White O."/>
            <person name="Brettin T.S."/>
        </authorList>
    </citation>
    <scope>NUCLEOTIDE SEQUENCE [LARGE SCALE GENOMIC DNA]</scope>
    <source>
        <strain>Langeland / NCTC 10281 / Type F</strain>
    </source>
</reference>
<sequence length="275" mass="30045">MRNTVSTFQELKNKGEKITMLTAYDYSMAKLIDSSGINGILVGDSLGMVCLGYENTLSVTMEDMLHHTKAVVRGTSNALVVGDMPFMSYQTSIYDAVYNAGRFIKEAGAHAVKLEGGATVAEEIKAIVKAQIPVMGHIGLTPQSVNMFGGFKVQGKNEKVAKKLIEDAKILEEAGAFSIVLECIPEKLSKIISESISIPTIGIGAGKYCDGQILVYQDMLSMFSDFKPKFVKSFGNIGESIKDGVSQYIKEVKEAKFPEEKHAFKIDDDVINKLY</sequence>
<feature type="chain" id="PRO_1000076822" description="3-methyl-2-oxobutanoate hydroxymethyltransferase">
    <location>
        <begin position="1"/>
        <end position="275"/>
    </location>
</feature>
<feature type="active site" description="Proton acceptor" evidence="1">
    <location>
        <position position="182"/>
    </location>
</feature>
<feature type="binding site" evidence="1">
    <location>
        <begin position="44"/>
        <end position="45"/>
    </location>
    <ligand>
        <name>3-methyl-2-oxobutanoate</name>
        <dbReference type="ChEBI" id="CHEBI:11851"/>
    </ligand>
</feature>
<feature type="binding site" evidence="1">
    <location>
        <position position="44"/>
    </location>
    <ligand>
        <name>Mg(2+)</name>
        <dbReference type="ChEBI" id="CHEBI:18420"/>
    </ligand>
</feature>
<feature type="binding site" evidence="1">
    <location>
        <position position="83"/>
    </location>
    <ligand>
        <name>3-methyl-2-oxobutanoate</name>
        <dbReference type="ChEBI" id="CHEBI:11851"/>
    </ligand>
</feature>
<feature type="binding site" evidence="1">
    <location>
        <position position="83"/>
    </location>
    <ligand>
        <name>Mg(2+)</name>
        <dbReference type="ChEBI" id="CHEBI:18420"/>
    </ligand>
</feature>
<feature type="binding site" evidence="1">
    <location>
        <position position="113"/>
    </location>
    <ligand>
        <name>3-methyl-2-oxobutanoate</name>
        <dbReference type="ChEBI" id="CHEBI:11851"/>
    </ligand>
</feature>
<feature type="binding site" evidence="1">
    <location>
        <position position="115"/>
    </location>
    <ligand>
        <name>Mg(2+)</name>
        <dbReference type="ChEBI" id="CHEBI:18420"/>
    </ligand>
</feature>
<gene>
    <name evidence="1" type="primary">panB</name>
    <name type="ordered locus">CLI_0510</name>
</gene>